<accession>Q65W17</accession>
<sequence>MKPLVIKLGGVLLDTPAAMENLFTALADYQQNFARPLLIVHGGGCLVDDLMKRLNLPVQKKNGLRVTPADQIDIIVGALAGIANKTLVAQAAKFKLNPVGLCLADGNLTQATQFDPELGHVAMVVAKNPALLNNLLGDAFLPIISSIAVDDNGLLMNVNADQAATAIAALINADLVMLSDVDGVLDANKQRLTELNSAQIEQLIEDKVITDGMIVKVNAALDAAKILNCGVDIANWKYPEKLTALFAGEIIGTRINP</sequence>
<evidence type="ECO:0000255" key="1">
    <source>
        <dbReference type="HAMAP-Rule" id="MF_00082"/>
    </source>
</evidence>
<comment type="function">
    <text evidence="1">Catalyzes the ATP-dependent phosphorylation of N-acetyl-L-glutamate.</text>
</comment>
<comment type="catalytic activity">
    <reaction evidence="1">
        <text>N-acetyl-L-glutamate + ATP = N-acetyl-L-glutamyl 5-phosphate + ADP</text>
        <dbReference type="Rhea" id="RHEA:14629"/>
        <dbReference type="ChEBI" id="CHEBI:30616"/>
        <dbReference type="ChEBI" id="CHEBI:44337"/>
        <dbReference type="ChEBI" id="CHEBI:57936"/>
        <dbReference type="ChEBI" id="CHEBI:456216"/>
        <dbReference type="EC" id="2.7.2.8"/>
    </reaction>
</comment>
<comment type="pathway">
    <text evidence="1">Amino-acid biosynthesis; L-arginine biosynthesis; N(2)-acetyl-L-ornithine from L-glutamate: step 2/4.</text>
</comment>
<comment type="subcellular location">
    <subcellularLocation>
        <location evidence="1">Cytoplasm</location>
    </subcellularLocation>
</comment>
<comment type="similarity">
    <text evidence="1">Belongs to the acetylglutamate kinase family. ArgB subfamily.</text>
</comment>
<dbReference type="EC" id="2.7.2.8" evidence="1"/>
<dbReference type="EMBL" id="AE016827">
    <property type="protein sequence ID" value="AAU36843.1"/>
    <property type="molecule type" value="Genomic_DNA"/>
</dbReference>
<dbReference type="RefSeq" id="WP_011199418.1">
    <property type="nucleotide sequence ID" value="NC_006300.1"/>
</dbReference>
<dbReference type="SMR" id="Q65W17"/>
<dbReference type="STRING" id="221988.MS0236"/>
<dbReference type="KEGG" id="msu:MS0236"/>
<dbReference type="eggNOG" id="COG0548">
    <property type="taxonomic scope" value="Bacteria"/>
</dbReference>
<dbReference type="HOGENOM" id="CLU_053680_1_1_6"/>
<dbReference type="OrthoDB" id="5915023at2"/>
<dbReference type="UniPathway" id="UPA00068">
    <property type="reaction ID" value="UER00107"/>
</dbReference>
<dbReference type="Proteomes" id="UP000000607">
    <property type="component" value="Chromosome"/>
</dbReference>
<dbReference type="GO" id="GO:0005737">
    <property type="term" value="C:cytoplasm"/>
    <property type="evidence" value="ECO:0007669"/>
    <property type="project" value="UniProtKB-SubCell"/>
</dbReference>
<dbReference type="GO" id="GO:0003991">
    <property type="term" value="F:acetylglutamate kinase activity"/>
    <property type="evidence" value="ECO:0007669"/>
    <property type="project" value="UniProtKB-UniRule"/>
</dbReference>
<dbReference type="GO" id="GO:0005524">
    <property type="term" value="F:ATP binding"/>
    <property type="evidence" value="ECO:0007669"/>
    <property type="project" value="UniProtKB-UniRule"/>
</dbReference>
<dbReference type="GO" id="GO:0042450">
    <property type="term" value="P:arginine biosynthetic process via ornithine"/>
    <property type="evidence" value="ECO:0007669"/>
    <property type="project" value="UniProtKB-UniRule"/>
</dbReference>
<dbReference type="GO" id="GO:0006526">
    <property type="term" value="P:L-arginine biosynthetic process"/>
    <property type="evidence" value="ECO:0007669"/>
    <property type="project" value="UniProtKB-UniPathway"/>
</dbReference>
<dbReference type="CDD" id="cd04249">
    <property type="entry name" value="AAK_NAGK-NC"/>
    <property type="match status" value="1"/>
</dbReference>
<dbReference type="Gene3D" id="3.40.1160.10">
    <property type="entry name" value="Acetylglutamate kinase-like"/>
    <property type="match status" value="1"/>
</dbReference>
<dbReference type="HAMAP" id="MF_00082">
    <property type="entry name" value="ArgB"/>
    <property type="match status" value="1"/>
</dbReference>
<dbReference type="InterPro" id="IPR036393">
    <property type="entry name" value="AceGlu_kinase-like_sf"/>
</dbReference>
<dbReference type="InterPro" id="IPR004662">
    <property type="entry name" value="AcgluKinase_fam"/>
</dbReference>
<dbReference type="InterPro" id="IPR037528">
    <property type="entry name" value="ArgB"/>
</dbReference>
<dbReference type="InterPro" id="IPR001048">
    <property type="entry name" value="Asp/Glu/Uridylate_kinase"/>
</dbReference>
<dbReference type="InterPro" id="IPR041731">
    <property type="entry name" value="NAGK-NC"/>
</dbReference>
<dbReference type="NCBIfam" id="TIGR00761">
    <property type="entry name" value="argB"/>
    <property type="match status" value="1"/>
</dbReference>
<dbReference type="PANTHER" id="PTHR23342">
    <property type="entry name" value="N-ACETYLGLUTAMATE SYNTHASE"/>
    <property type="match status" value="1"/>
</dbReference>
<dbReference type="PANTHER" id="PTHR23342:SF0">
    <property type="entry name" value="N-ACETYLGLUTAMATE SYNTHASE, MITOCHONDRIAL"/>
    <property type="match status" value="1"/>
</dbReference>
<dbReference type="Pfam" id="PF00696">
    <property type="entry name" value="AA_kinase"/>
    <property type="match status" value="1"/>
</dbReference>
<dbReference type="PIRSF" id="PIRSF000728">
    <property type="entry name" value="NAGK"/>
    <property type="match status" value="1"/>
</dbReference>
<dbReference type="SUPFAM" id="SSF53633">
    <property type="entry name" value="Carbamate kinase-like"/>
    <property type="match status" value="1"/>
</dbReference>
<organism>
    <name type="scientific">Mannheimia succiniciproducens (strain KCTC 0769BP / MBEL55E)</name>
    <dbReference type="NCBI Taxonomy" id="221988"/>
    <lineage>
        <taxon>Bacteria</taxon>
        <taxon>Pseudomonadati</taxon>
        <taxon>Pseudomonadota</taxon>
        <taxon>Gammaproteobacteria</taxon>
        <taxon>Pasteurellales</taxon>
        <taxon>Pasteurellaceae</taxon>
        <taxon>Basfia</taxon>
    </lineage>
</organism>
<keyword id="KW-0028">Amino-acid biosynthesis</keyword>
<keyword id="KW-0055">Arginine biosynthesis</keyword>
<keyword id="KW-0067">ATP-binding</keyword>
<keyword id="KW-0963">Cytoplasm</keyword>
<keyword id="KW-0418">Kinase</keyword>
<keyword id="KW-0547">Nucleotide-binding</keyword>
<keyword id="KW-0808">Transferase</keyword>
<protein>
    <recommendedName>
        <fullName evidence="1">Acetylglutamate kinase</fullName>
        <ecNumber evidence="1">2.7.2.8</ecNumber>
    </recommendedName>
    <alternativeName>
        <fullName evidence="1">N-acetyl-L-glutamate 5-phosphotransferase</fullName>
    </alternativeName>
    <alternativeName>
        <fullName evidence="1">NAG kinase</fullName>
        <shortName evidence="1">NAGK</shortName>
    </alternativeName>
</protein>
<feature type="chain" id="PRO_0000112630" description="Acetylglutamate kinase">
    <location>
        <begin position="1"/>
        <end position="257"/>
    </location>
</feature>
<feature type="binding site" evidence="1">
    <location>
        <begin position="43"/>
        <end position="44"/>
    </location>
    <ligand>
        <name>substrate</name>
    </ligand>
</feature>
<feature type="binding site" evidence="1">
    <location>
        <position position="65"/>
    </location>
    <ligand>
        <name>substrate</name>
    </ligand>
</feature>
<feature type="binding site" evidence="1">
    <location>
        <position position="157"/>
    </location>
    <ligand>
        <name>substrate</name>
    </ligand>
</feature>
<feature type="site" description="Transition state stabilizer" evidence="1">
    <location>
        <position position="7"/>
    </location>
</feature>
<feature type="site" description="Transition state stabilizer" evidence="1">
    <location>
        <position position="216"/>
    </location>
</feature>
<reference key="1">
    <citation type="journal article" date="2004" name="Nat. Biotechnol.">
        <title>The genome sequence of the capnophilic rumen bacterium Mannheimia succiniciproducens.</title>
        <authorList>
            <person name="Hong S.H."/>
            <person name="Kim J.S."/>
            <person name="Lee S.Y."/>
            <person name="In Y.H."/>
            <person name="Choi S.S."/>
            <person name="Rih J.-K."/>
            <person name="Kim C.H."/>
            <person name="Jeong H."/>
            <person name="Hur C.G."/>
            <person name="Kim J.J."/>
        </authorList>
    </citation>
    <scope>NUCLEOTIDE SEQUENCE [LARGE SCALE GENOMIC DNA]</scope>
    <source>
        <strain>KCTC 0769BP / MBEL55E</strain>
    </source>
</reference>
<name>ARGB_MANSM</name>
<proteinExistence type="inferred from homology"/>
<gene>
    <name evidence="1" type="primary">argB</name>
    <name type="ordered locus">MS0236</name>
</gene>